<sequence>MLLIPAIDLKDGQCVRLKQGDMDQATVFSEDPAAMARHWVNQGARRLHLVDLNGAFVGKPRNEAAIKAIIAEVGDEIPVQLGGGIRDLNTIERWLDDGLSYVIIGTAAVKNPGFLKDACAAFGGHIIVGLDAKDGKVATDGWSKLTGHEVADLARKYEDYGVESIIYTDIGRDGMLQGINIDATVKLARSMSIPVIASGGLSNMADIDQLCAVEGEGVEGVICGRAIYSGDLNFAAAQAHADKLGAE</sequence>
<reference key="1">
    <citation type="journal article" date="2010" name="PLoS ONE">
        <title>The complete genome sequence of Cupriavidus metallidurans strain CH34, a master survivalist in harsh and anthropogenic environments.</title>
        <authorList>
            <person name="Janssen P.J."/>
            <person name="Van Houdt R."/>
            <person name="Moors H."/>
            <person name="Monsieurs P."/>
            <person name="Morin N."/>
            <person name="Michaux A."/>
            <person name="Benotmane M.A."/>
            <person name="Leys N."/>
            <person name="Vallaeys T."/>
            <person name="Lapidus A."/>
            <person name="Monchy S."/>
            <person name="Medigue C."/>
            <person name="Taghavi S."/>
            <person name="McCorkle S."/>
            <person name="Dunn J."/>
            <person name="van der Lelie D."/>
            <person name="Mergeay M."/>
        </authorList>
    </citation>
    <scope>NUCLEOTIDE SEQUENCE [LARGE SCALE GENOMIC DNA]</scope>
    <source>
        <strain>ATCC 43123 / DSM 2839 / NBRC 102507 / CH34</strain>
    </source>
</reference>
<protein>
    <recommendedName>
        <fullName evidence="1">1-(5-phosphoribosyl)-5-[(5-phosphoribosylamino)methylideneamino] imidazole-4-carboxamide isomerase</fullName>
        <ecNumber evidence="1">5.3.1.16</ecNumber>
    </recommendedName>
    <alternativeName>
        <fullName evidence="1">Phosphoribosylformimino-5-aminoimidazole carboxamide ribotide isomerase</fullName>
    </alternativeName>
</protein>
<dbReference type="EC" id="5.3.1.16" evidence="1"/>
<dbReference type="EMBL" id="CP000352">
    <property type="protein sequence ID" value="ABF10115.1"/>
    <property type="molecule type" value="Genomic_DNA"/>
</dbReference>
<dbReference type="RefSeq" id="WP_008643054.1">
    <property type="nucleotide sequence ID" value="NC_007973.1"/>
</dbReference>
<dbReference type="SMR" id="Q1LIB1"/>
<dbReference type="STRING" id="266264.Rmet_3243"/>
<dbReference type="GeneID" id="60825567"/>
<dbReference type="KEGG" id="rme:Rmet_3243"/>
<dbReference type="eggNOG" id="COG0106">
    <property type="taxonomic scope" value="Bacteria"/>
</dbReference>
<dbReference type="HOGENOM" id="CLU_048577_1_1_4"/>
<dbReference type="UniPathway" id="UPA00031">
    <property type="reaction ID" value="UER00009"/>
</dbReference>
<dbReference type="Proteomes" id="UP000002429">
    <property type="component" value="Chromosome"/>
</dbReference>
<dbReference type="GO" id="GO:0005737">
    <property type="term" value="C:cytoplasm"/>
    <property type="evidence" value="ECO:0007669"/>
    <property type="project" value="UniProtKB-SubCell"/>
</dbReference>
<dbReference type="GO" id="GO:0003949">
    <property type="term" value="F:1-(5-phosphoribosyl)-5-[(5-phosphoribosylamino)methylideneamino]imidazole-4-carboxamide isomerase activity"/>
    <property type="evidence" value="ECO:0007669"/>
    <property type="project" value="UniProtKB-UniRule"/>
</dbReference>
<dbReference type="GO" id="GO:0000105">
    <property type="term" value="P:L-histidine biosynthetic process"/>
    <property type="evidence" value="ECO:0007669"/>
    <property type="project" value="UniProtKB-UniRule"/>
</dbReference>
<dbReference type="GO" id="GO:0000162">
    <property type="term" value="P:L-tryptophan biosynthetic process"/>
    <property type="evidence" value="ECO:0007669"/>
    <property type="project" value="TreeGrafter"/>
</dbReference>
<dbReference type="CDD" id="cd04732">
    <property type="entry name" value="HisA"/>
    <property type="match status" value="1"/>
</dbReference>
<dbReference type="FunFam" id="3.20.20.70:FF:000009">
    <property type="entry name" value="1-(5-phosphoribosyl)-5-[(5-phosphoribosylamino)methylideneamino] imidazole-4-carboxamide isomerase"/>
    <property type="match status" value="1"/>
</dbReference>
<dbReference type="Gene3D" id="3.20.20.70">
    <property type="entry name" value="Aldolase class I"/>
    <property type="match status" value="1"/>
</dbReference>
<dbReference type="HAMAP" id="MF_01014">
    <property type="entry name" value="HisA"/>
    <property type="match status" value="1"/>
</dbReference>
<dbReference type="InterPro" id="IPR013785">
    <property type="entry name" value="Aldolase_TIM"/>
</dbReference>
<dbReference type="InterPro" id="IPR006062">
    <property type="entry name" value="His_biosynth"/>
</dbReference>
<dbReference type="InterPro" id="IPR006063">
    <property type="entry name" value="HisA_bact_arch"/>
</dbReference>
<dbReference type="InterPro" id="IPR044524">
    <property type="entry name" value="Isoase_HisA-like"/>
</dbReference>
<dbReference type="InterPro" id="IPR023016">
    <property type="entry name" value="Isoase_HisA-like_bact"/>
</dbReference>
<dbReference type="InterPro" id="IPR011060">
    <property type="entry name" value="RibuloseP-bd_barrel"/>
</dbReference>
<dbReference type="NCBIfam" id="TIGR00007">
    <property type="entry name" value="1-(5-phosphoribosyl)-5-[(5-phosphoribosylamino)methylideneamino]imidazole-4-carboxamide isomerase"/>
    <property type="match status" value="1"/>
</dbReference>
<dbReference type="NCBIfam" id="NF010112">
    <property type="entry name" value="PRK13585.1"/>
    <property type="match status" value="1"/>
</dbReference>
<dbReference type="PANTHER" id="PTHR43090">
    <property type="entry name" value="1-(5-PHOSPHORIBOSYL)-5-[(5-PHOSPHORIBOSYLAMINO)METHYLIDENEAMINO] IMIDAZOLE-4-CARBOXAMIDE ISOMERASE"/>
    <property type="match status" value="1"/>
</dbReference>
<dbReference type="PANTHER" id="PTHR43090:SF2">
    <property type="entry name" value="1-(5-PHOSPHORIBOSYL)-5-[(5-PHOSPHORIBOSYLAMINO)METHYLIDENEAMINO] IMIDAZOLE-4-CARBOXAMIDE ISOMERASE"/>
    <property type="match status" value="1"/>
</dbReference>
<dbReference type="Pfam" id="PF00977">
    <property type="entry name" value="His_biosynth"/>
    <property type="match status" value="1"/>
</dbReference>
<dbReference type="SUPFAM" id="SSF51366">
    <property type="entry name" value="Ribulose-phoshate binding barrel"/>
    <property type="match status" value="1"/>
</dbReference>
<organism>
    <name type="scientific">Cupriavidus metallidurans (strain ATCC 43123 / DSM 2839 / NBRC 102507 / CH34)</name>
    <name type="common">Ralstonia metallidurans</name>
    <dbReference type="NCBI Taxonomy" id="266264"/>
    <lineage>
        <taxon>Bacteria</taxon>
        <taxon>Pseudomonadati</taxon>
        <taxon>Pseudomonadota</taxon>
        <taxon>Betaproteobacteria</taxon>
        <taxon>Burkholderiales</taxon>
        <taxon>Burkholderiaceae</taxon>
        <taxon>Cupriavidus</taxon>
    </lineage>
</organism>
<gene>
    <name evidence="1" type="primary">hisA</name>
    <name type="ordered locus">Rmet_3243</name>
</gene>
<proteinExistence type="inferred from homology"/>
<feature type="chain" id="PRO_0000290518" description="1-(5-phosphoribosyl)-5-[(5-phosphoribosylamino)methylideneamino] imidazole-4-carboxamide isomerase">
    <location>
        <begin position="1"/>
        <end position="247"/>
    </location>
</feature>
<feature type="active site" description="Proton acceptor" evidence="1">
    <location>
        <position position="8"/>
    </location>
</feature>
<feature type="active site" description="Proton donor" evidence="1">
    <location>
        <position position="131"/>
    </location>
</feature>
<evidence type="ECO:0000255" key="1">
    <source>
        <dbReference type="HAMAP-Rule" id="MF_01014"/>
    </source>
</evidence>
<name>HIS4_CUPMC</name>
<accession>Q1LIB1</accession>
<comment type="catalytic activity">
    <reaction evidence="1">
        <text>1-(5-phospho-beta-D-ribosyl)-5-[(5-phospho-beta-D-ribosylamino)methylideneamino]imidazole-4-carboxamide = 5-[(5-phospho-1-deoxy-D-ribulos-1-ylimino)methylamino]-1-(5-phospho-beta-D-ribosyl)imidazole-4-carboxamide</text>
        <dbReference type="Rhea" id="RHEA:15469"/>
        <dbReference type="ChEBI" id="CHEBI:58435"/>
        <dbReference type="ChEBI" id="CHEBI:58525"/>
        <dbReference type="EC" id="5.3.1.16"/>
    </reaction>
</comment>
<comment type="pathway">
    <text evidence="1">Amino-acid biosynthesis; L-histidine biosynthesis; L-histidine from 5-phospho-alpha-D-ribose 1-diphosphate: step 4/9.</text>
</comment>
<comment type="subcellular location">
    <subcellularLocation>
        <location evidence="1">Cytoplasm</location>
    </subcellularLocation>
</comment>
<comment type="similarity">
    <text evidence="1">Belongs to the HisA/HisF family.</text>
</comment>
<keyword id="KW-0028">Amino-acid biosynthesis</keyword>
<keyword id="KW-0963">Cytoplasm</keyword>
<keyword id="KW-0368">Histidine biosynthesis</keyword>
<keyword id="KW-0413">Isomerase</keyword>
<keyword id="KW-1185">Reference proteome</keyword>